<organism>
    <name type="scientific">Anaeromyxobacter dehalogenans (strain 2CP-1 / ATCC BAA-258)</name>
    <dbReference type="NCBI Taxonomy" id="455488"/>
    <lineage>
        <taxon>Bacteria</taxon>
        <taxon>Pseudomonadati</taxon>
        <taxon>Myxococcota</taxon>
        <taxon>Myxococcia</taxon>
        <taxon>Myxococcales</taxon>
        <taxon>Cystobacterineae</taxon>
        <taxon>Anaeromyxobacteraceae</taxon>
        <taxon>Anaeromyxobacter</taxon>
    </lineage>
</organism>
<gene>
    <name evidence="1" type="primary">nrdR</name>
    <name type="ordered locus">A2cp1_2927</name>
</gene>
<dbReference type="EMBL" id="CP001359">
    <property type="protein sequence ID" value="ACL66264.1"/>
    <property type="molecule type" value="Genomic_DNA"/>
</dbReference>
<dbReference type="RefSeq" id="WP_012634005.1">
    <property type="nucleotide sequence ID" value="NC_011891.1"/>
</dbReference>
<dbReference type="SMR" id="B8JEW8"/>
<dbReference type="KEGG" id="acp:A2cp1_2927"/>
<dbReference type="HOGENOM" id="CLU_108412_0_0_7"/>
<dbReference type="Proteomes" id="UP000007089">
    <property type="component" value="Chromosome"/>
</dbReference>
<dbReference type="GO" id="GO:0005524">
    <property type="term" value="F:ATP binding"/>
    <property type="evidence" value="ECO:0007669"/>
    <property type="project" value="UniProtKB-KW"/>
</dbReference>
<dbReference type="GO" id="GO:0003677">
    <property type="term" value="F:DNA binding"/>
    <property type="evidence" value="ECO:0007669"/>
    <property type="project" value="UniProtKB-KW"/>
</dbReference>
<dbReference type="GO" id="GO:0008270">
    <property type="term" value="F:zinc ion binding"/>
    <property type="evidence" value="ECO:0007669"/>
    <property type="project" value="UniProtKB-UniRule"/>
</dbReference>
<dbReference type="GO" id="GO:0045892">
    <property type="term" value="P:negative regulation of DNA-templated transcription"/>
    <property type="evidence" value="ECO:0007669"/>
    <property type="project" value="UniProtKB-UniRule"/>
</dbReference>
<dbReference type="HAMAP" id="MF_00440">
    <property type="entry name" value="NrdR"/>
    <property type="match status" value="1"/>
</dbReference>
<dbReference type="InterPro" id="IPR005144">
    <property type="entry name" value="ATP-cone_dom"/>
</dbReference>
<dbReference type="InterPro" id="IPR055173">
    <property type="entry name" value="NrdR-like_N"/>
</dbReference>
<dbReference type="InterPro" id="IPR003796">
    <property type="entry name" value="RNR_NrdR-like"/>
</dbReference>
<dbReference type="NCBIfam" id="TIGR00244">
    <property type="entry name" value="transcriptional regulator NrdR"/>
    <property type="match status" value="1"/>
</dbReference>
<dbReference type="PANTHER" id="PTHR30455">
    <property type="entry name" value="TRANSCRIPTIONAL REPRESSOR NRDR"/>
    <property type="match status" value="1"/>
</dbReference>
<dbReference type="PANTHER" id="PTHR30455:SF2">
    <property type="entry name" value="TRANSCRIPTIONAL REPRESSOR NRDR"/>
    <property type="match status" value="1"/>
</dbReference>
<dbReference type="Pfam" id="PF03477">
    <property type="entry name" value="ATP-cone"/>
    <property type="match status" value="1"/>
</dbReference>
<dbReference type="Pfam" id="PF22811">
    <property type="entry name" value="Zn_ribbon_NrdR"/>
    <property type="match status" value="1"/>
</dbReference>
<dbReference type="PROSITE" id="PS51161">
    <property type="entry name" value="ATP_CONE"/>
    <property type="match status" value="1"/>
</dbReference>
<evidence type="ECO:0000255" key="1">
    <source>
        <dbReference type="HAMAP-Rule" id="MF_00440"/>
    </source>
</evidence>
<proteinExistence type="inferred from homology"/>
<comment type="function">
    <text evidence="1">Negatively regulates transcription of bacterial ribonucleotide reductase nrd genes and operons by binding to NrdR-boxes.</text>
</comment>
<comment type="cofactor">
    <cofactor evidence="1">
        <name>Zn(2+)</name>
        <dbReference type="ChEBI" id="CHEBI:29105"/>
    </cofactor>
    <text evidence="1">Binds 1 zinc ion.</text>
</comment>
<comment type="similarity">
    <text evidence="1">Belongs to the NrdR family.</text>
</comment>
<keyword id="KW-0067">ATP-binding</keyword>
<keyword id="KW-0238">DNA-binding</keyword>
<keyword id="KW-0479">Metal-binding</keyword>
<keyword id="KW-0547">Nucleotide-binding</keyword>
<keyword id="KW-0678">Repressor</keyword>
<keyword id="KW-0804">Transcription</keyword>
<keyword id="KW-0805">Transcription regulation</keyword>
<keyword id="KW-0862">Zinc</keyword>
<keyword id="KW-0863">Zinc-finger</keyword>
<protein>
    <recommendedName>
        <fullName evidence="1">Transcriptional repressor NrdR</fullName>
    </recommendedName>
</protein>
<accession>B8JEW8</accession>
<sequence>MRCPYCGHLEDRVVDSRETQDGQATRRRRACLSCERRFTTYERIEDVLPQVVKKDGRREAFDRAKIVEGVATACQKRPVSTEQVEALVSAVERQVQELGEREIRTAVIGEAVMQRLRTLDEVAYVRFASVYRAFRDVGEFMTELAGLARKDGEER</sequence>
<feature type="chain" id="PRO_1000191775" description="Transcriptional repressor NrdR">
    <location>
        <begin position="1"/>
        <end position="155"/>
    </location>
</feature>
<feature type="domain" description="ATP-cone" evidence="1">
    <location>
        <begin position="49"/>
        <end position="139"/>
    </location>
</feature>
<feature type="zinc finger region" evidence="1">
    <location>
        <begin position="3"/>
        <end position="34"/>
    </location>
</feature>
<name>NRDR_ANAD2</name>
<reference key="1">
    <citation type="submission" date="2009-01" db="EMBL/GenBank/DDBJ databases">
        <title>Complete sequence of Anaeromyxobacter dehalogenans 2CP-1.</title>
        <authorList>
            <person name="Lucas S."/>
            <person name="Copeland A."/>
            <person name="Lapidus A."/>
            <person name="Glavina del Rio T."/>
            <person name="Dalin E."/>
            <person name="Tice H."/>
            <person name="Bruce D."/>
            <person name="Goodwin L."/>
            <person name="Pitluck S."/>
            <person name="Saunders E."/>
            <person name="Brettin T."/>
            <person name="Detter J.C."/>
            <person name="Han C."/>
            <person name="Larimer F."/>
            <person name="Land M."/>
            <person name="Hauser L."/>
            <person name="Kyrpides N."/>
            <person name="Ovchinnikova G."/>
            <person name="Beliaev A.S."/>
            <person name="Richardson P."/>
        </authorList>
    </citation>
    <scope>NUCLEOTIDE SEQUENCE [LARGE SCALE GENOMIC DNA]</scope>
    <source>
        <strain>2CP-1 / ATCC BAA-258</strain>
    </source>
</reference>